<dbReference type="EMBL" id="U25141">
    <property type="protein sequence ID" value="AAA96004.1"/>
    <property type="molecule type" value="mRNA"/>
</dbReference>
<dbReference type="EMBL" id="U51267">
    <property type="protein sequence ID" value="AAA96518.1"/>
    <property type="molecule type" value="mRNA"/>
</dbReference>
<dbReference type="RefSeq" id="NP_001035477.1">
    <property type="nucleotide sequence ID" value="NM_001040387.1"/>
</dbReference>
<dbReference type="SMR" id="P47793"/>
<dbReference type="FunCoup" id="P47793">
    <property type="interactions" value="810"/>
</dbReference>
<dbReference type="STRING" id="7955.ENSDARP00000095904"/>
<dbReference type="GlyCosmos" id="P47793">
    <property type="glycosylation" value="2 sites, No reported glycans"/>
</dbReference>
<dbReference type="PaxDb" id="7955-ENSDARP00000095904"/>
<dbReference type="Ensembl" id="ENSDART00000105133">
    <property type="protein sequence ID" value="ENSDARP00000095904"/>
    <property type="gene ID" value="ENSDARG00000071208"/>
</dbReference>
<dbReference type="GeneID" id="30123"/>
<dbReference type="KEGG" id="dre:30123"/>
<dbReference type="AGR" id="ZFIN:ZDB-GENE-980526-352"/>
<dbReference type="CTD" id="54361"/>
<dbReference type="ZFIN" id="ZDB-GENE-980526-352">
    <property type="gene designation" value="wnt4"/>
</dbReference>
<dbReference type="eggNOG" id="KOG3913">
    <property type="taxonomic scope" value="Eukaryota"/>
</dbReference>
<dbReference type="HOGENOM" id="CLU_033039_1_0_1"/>
<dbReference type="InParanoid" id="P47793"/>
<dbReference type="OMA" id="NFEWSGC"/>
<dbReference type="OrthoDB" id="5945655at2759"/>
<dbReference type="PhylomeDB" id="P47793"/>
<dbReference type="TreeFam" id="TF105310"/>
<dbReference type="Reactome" id="R-DRE-3238698">
    <property type="pathway name" value="WNT ligand biogenesis and trafficking"/>
</dbReference>
<dbReference type="Reactome" id="R-DRE-4086400">
    <property type="pathway name" value="PCP/CE pathway"/>
</dbReference>
<dbReference type="PRO" id="PR:P47793"/>
<dbReference type="Proteomes" id="UP000000437">
    <property type="component" value="Chromosome 11"/>
</dbReference>
<dbReference type="Bgee" id="ENSDARG00000071208">
    <property type="expression patterns" value="Expressed in neural tube and 43 other cell types or tissues"/>
</dbReference>
<dbReference type="ExpressionAtlas" id="P47793">
    <property type="expression patterns" value="baseline and differential"/>
</dbReference>
<dbReference type="GO" id="GO:0005615">
    <property type="term" value="C:extracellular space"/>
    <property type="evidence" value="ECO:0000318"/>
    <property type="project" value="GO_Central"/>
</dbReference>
<dbReference type="GO" id="GO:0005125">
    <property type="term" value="F:cytokine activity"/>
    <property type="evidence" value="ECO:0000318"/>
    <property type="project" value="GO_Central"/>
</dbReference>
<dbReference type="GO" id="GO:0005109">
    <property type="term" value="F:frizzled binding"/>
    <property type="evidence" value="ECO:0000318"/>
    <property type="project" value="GO_Central"/>
</dbReference>
<dbReference type="GO" id="GO:0060070">
    <property type="term" value="P:canonical Wnt signaling pathway"/>
    <property type="evidence" value="ECO:0000318"/>
    <property type="project" value="GO_Central"/>
</dbReference>
<dbReference type="GO" id="GO:0045165">
    <property type="term" value="P:cell fate commitment"/>
    <property type="evidence" value="ECO:0000318"/>
    <property type="project" value="GO_Central"/>
</dbReference>
<dbReference type="GO" id="GO:0042074">
    <property type="term" value="P:cell migration involved in gastrulation"/>
    <property type="evidence" value="ECO:0000315"/>
    <property type="project" value="UniProtKB"/>
</dbReference>
<dbReference type="GO" id="GO:0048703">
    <property type="term" value="P:embryonic viscerocranium morphogenesis"/>
    <property type="evidence" value="ECO:0000315"/>
    <property type="project" value="ZFIN"/>
</dbReference>
<dbReference type="GO" id="GO:0021986">
    <property type="term" value="P:habenula development"/>
    <property type="evidence" value="ECO:0000315"/>
    <property type="project" value="ZFIN"/>
</dbReference>
<dbReference type="GO" id="GO:0007507">
    <property type="term" value="P:heart development"/>
    <property type="evidence" value="ECO:0000316"/>
    <property type="project" value="ZFIN"/>
</dbReference>
<dbReference type="GO" id="GO:0030182">
    <property type="term" value="P:neuron differentiation"/>
    <property type="evidence" value="ECO:0000318"/>
    <property type="project" value="GO_Central"/>
</dbReference>
<dbReference type="GO" id="GO:0045893">
    <property type="term" value="P:positive regulation of DNA-templated transcription"/>
    <property type="evidence" value="ECO:0000353"/>
    <property type="project" value="ZFIN"/>
</dbReference>
<dbReference type="GO" id="GO:0048841">
    <property type="term" value="P:regulation of axon extension involved in axon guidance"/>
    <property type="evidence" value="ECO:0000315"/>
    <property type="project" value="ZFIN"/>
</dbReference>
<dbReference type="GO" id="GO:0070654">
    <property type="term" value="P:sensory epithelium regeneration"/>
    <property type="evidence" value="ECO:0000270"/>
    <property type="project" value="ZFIN"/>
</dbReference>
<dbReference type="CDD" id="cd19336">
    <property type="entry name" value="Wnt_Wnt4"/>
    <property type="match status" value="1"/>
</dbReference>
<dbReference type="FunFam" id="3.30.2460.20:FF:000001">
    <property type="entry name" value="Wnt homolog"/>
    <property type="match status" value="1"/>
</dbReference>
<dbReference type="Gene3D" id="3.30.2460.20">
    <property type="match status" value="1"/>
</dbReference>
<dbReference type="InterPro" id="IPR005817">
    <property type="entry name" value="Wnt"/>
</dbReference>
<dbReference type="InterPro" id="IPR009142">
    <property type="entry name" value="Wnt4"/>
</dbReference>
<dbReference type="InterPro" id="IPR043158">
    <property type="entry name" value="Wnt_C"/>
</dbReference>
<dbReference type="InterPro" id="IPR018161">
    <property type="entry name" value="Wnt_CS"/>
</dbReference>
<dbReference type="PANTHER" id="PTHR12027:SF105">
    <property type="entry name" value="PROTEIN WNT-4A"/>
    <property type="match status" value="1"/>
</dbReference>
<dbReference type="PANTHER" id="PTHR12027">
    <property type="entry name" value="WNT RELATED"/>
    <property type="match status" value="1"/>
</dbReference>
<dbReference type="Pfam" id="PF00110">
    <property type="entry name" value="wnt"/>
    <property type="match status" value="1"/>
</dbReference>
<dbReference type="PRINTS" id="PR01844">
    <property type="entry name" value="WNT4PROTEIN"/>
</dbReference>
<dbReference type="PRINTS" id="PR01349">
    <property type="entry name" value="WNTPROTEIN"/>
</dbReference>
<dbReference type="SMART" id="SM00097">
    <property type="entry name" value="WNT1"/>
    <property type="match status" value="1"/>
</dbReference>
<dbReference type="PROSITE" id="PS00246">
    <property type="entry name" value="WNT1"/>
    <property type="match status" value="1"/>
</dbReference>
<organism>
    <name type="scientific">Danio rerio</name>
    <name type="common">Zebrafish</name>
    <name type="synonym">Brachydanio rerio</name>
    <dbReference type="NCBI Taxonomy" id="7955"/>
    <lineage>
        <taxon>Eukaryota</taxon>
        <taxon>Metazoa</taxon>
        <taxon>Chordata</taxon>
        <taxon>Craniata</taxon>
        <taxon>Vertebrata</taxon>
        <taxon>Euteleostomi</taxon>
        <taxon>Actinopterygii</taxon>
        <taxon>Neopterygii</taxon>
        <taxon>Teleostei</taxon>
        <taxon>Ostariophysi</taxon>
        <taxon>Cypriniformes</taxon>
        <taxon>Danionidae</taxon>
        <taxon>Danioninae</taxon>
        <taxon>Danio</taxon>
    </lineage>
</organism>
<accession>P47793</accession>
<accession>Q92049</accession>
<proteinExistence type="evidence at transcript level"/>
<protein>
    <recommendedName>
        <fullName>Protein Wnt-4a</fullName>
    </recommendedName>
</protein>
<name>WNT4A_DANRE</name>
<keyword id="KW-0217">Developmental protein</keyword>
<keyword id="KW-1015">Disulfide bond</keyword>
<keyword id="KW-0272">Extracellular matrix</keyword>
<keyword id="KW-0325">Glycoprotein</keyword>
<keyword id="KW-0449">Lipoprotein</keyword>
<keyword id="KW-1185">Reference proteome</keyword>
<keyword id="KW-0964">Secreted</keyword>
<keyword id="KW-0732">Signal</keyword>
<keyword id="KW-0879">Wnt signaling pathway</keyword>
<sequence length="352" mass="39431">MSSEYLIRSLLMLFLALFSANASNWLYLAKLSSVGSISDEETCEKLRGLIQRQVQICKRNVEVMDAVRRGAQLAIDECQYQFRNRRWNCSTLESVPVFGKVVTQGTREAAFVYAISAASVAFAVTRACSSGELDKCGCDRNVHGVSPEGFQWSGCSDNIAYGVAFSQSFVDIRERSKGQSSNRALMNLHNNEAGRKAILNHMRVECKCHGVSGSCEVKTCWKAMPPFRKVGNVIKEKFDGATEVELRKVGTTKVLVPRNSQFKPHTDEDLVYLDPSPDFCEHDPRTPGIMGTAGRFCNKTSKAIDGCELMCCGRGFHTEEVEVVDRCSCKFHWCCYVKCKQCRKMVEMHTCR</sequence>
<comment type="function">
    <text evidence="5 7">Ligand for members of the frizzled family of seven transmembrane receptors (Probable). Plays an important role in embryonic development (PubMed:8541205).</text>
</comment>
<comment type="subcellular location">
    <subcellularLocation>
        <location>Secreted</location>
        <location>Extracellular space</location>
        <location>Extracellular matrix</location>
    </subcellularLocation>
</comment>
<comment type="tissue specificity">
    <text>Caudal forebrain and neural keel, the floor plate, the gill slit and the developing pronephros.</text>
</comment>
<comment type="developmental stage">
    <text evidence="6">First detected at the end of gastrulation in the anterior neuroectoderm. Expression increases in the developing brain during somitogenesis but has gone by 36 hours. Expression in the floor plate begins at the 10 somite stage and persists at 72 hours.</text>
</comment>
<comment type="PTM">
    <text evidence="1 3">Palmitoleoylation is required for efficient binding to frizzled receptors. Depalmitoleoylation leads to Wnt signaling pathway inhibition.</text>
</comment>
<comment type="similarity">
    <text evidence="7">Belongs to the Wnt family.</text>
</comment>
<evidence type="ECO:0000250" key="1">
    <source>
        <dbReference type="UniProtKB" id="P27467"/>
    </source>
</evidence>
<evidence type="ECO:0000250" key="2">
    <source>
        <dbReference type="UniProtKB" id="P28026"/>
    </source>
</evidence>
<evidence type="ECO:0000250" key="3">
    <source>
        <dbReference type="UniProtKB" id="P56704"/>
    </source>
</evidence>
<evidence type="ECO:0000255" key="4"/>
<evidence type="ECO:0000269" key="5">
    <source>
    </source>
</evidence>
<evidence type="ECO:0000269" key="6">
    <source ref="2"/>
</evidence>
<evidence type="ECO:0000305" key="7"/>
<reference key="1">
    <citation type="journal article" date="1995" name="Mech. Dev.">
        <title>Wnt4 affects morphogenesis when misexpressed in the zebrafish embryo.</title>
        <authorList>
            <person name="Ungar A.R."/>
            <person name="Kelly G.M."/>
            <person name="Moon R.T."/>
        </authorList>
    </citation>
    <scope>NUCLEOTIDE SEQUENCE [MRNA]</scope>
    <scope>FUNCTION</scope>
    <source>
        <tissue>Embryo</tissue>
    </source>
</reference>
<reference key="2">
    <citation type="journal article" date="1996" name="Dev. Genes Evol.">
        <title>Three Wnt genes expressed in a wide variety of tissues during development of the zebrafish, Danio rerio: developmental and evolutionary perspectives.</title>
        <authorList>
            <person name="Blader P."/>
            <person name="Straehle U."/>
            <person name="Ingham P.W."/>
        </authorList>
    </citation>
    <scope>NUCLEOTIDE SEQUENCE [MRNA]</scope>
    <scope>DEVELOPMENTAL STAGE</scope>
    <source>
        <tissue>Embryo</tissue>
    </source>
</reference>
<gene>
    <name type="primary">wnt4a</name>
    <name type="synonym">wnt-4</name>
    <name type="synonym">wnt4</name>
</gene>
<feature type="signal peptide" evidence="4">
    <location>
        <begin position="1"/>
        <end position="22"/>
    </location>
</feature>
<feature type="chain" id="PRO_0000041424" description="Protein Wnt-4a">
    <location>
        <begin position="23"/>
        <end position="352"/>
    </location>
</feature>
<feature type="lipid moiety-binding region" description="O-palmitoleoyl serine; by PORCN" evidence="3">
    <location>
        <position position="212"/>
    </location>
</feature>
<feature type="glycosylation site" description="N-linked (GlcNAc...) asparagine" evidence="4">
    <location>
        <position position="88"/>
    </location>
</feature>
<feature type="glycosylation site" description="N-linked (GlcNAc...) asparagine" evidence="4">
    <location>
        <position position="298"/>
    </location>
</feature>
<feature type="disulfide bond" evidence="2">
    <location>
        <begin position="78"/>
        <end position="89"/>
    </location>
</feature>
<feature type="disulfide bond" evidence="2">
    <location>
        <begin position="128"/>
        <end position="136"/>
    </location>
</feature>
<feature type="disulfide bond" evidence="2">
    <location>
        <begin position="138"/>
        <end position="155"/>
    </location>
</feature>
<feature type="disulfide bond" evidence="2">
    <location>
        <begin position="206"/>
        <end position="220"/>
    </location>
</feature>
<feature type="disulfide bond" evidence="2">
    <location>
        <begin position="208"/>
        <end position="215"/>
    </location>
</feature>
<feature type="disulfide bond" evidence="2">
    <location>
        <begin position="280"/>
        <end position="312"/>
    </location>
</feature>
<feature type="disulfide bond" evidence="2">
    <location>
        <begin position="297"/>
        <end position="307"/>
    </location>
</feature>
<feature type="disulfide bond" evidence="2">
    <location>
        <begin position="311"/>
        <end position="351"/>
    </location>
</feature>
<feature type="disulfide bond" evidence="2">
    <location>
        <begin position="327"/>
        <end position="342"/>
    </location>
</feature>
<feature type="disulfide bond" evidence="2">
    <location>
        <begin position="329"/>
        <end position="339"/>
    </location>
</feature>
<feature type="disulfide bond" evidence="2">
    <location>
        <begin position="334"/>
        <end position="335"/>
    </location>
</feature>
<feature type="sequence conflict" description="In Ref. 2; AAA96518." evidence="7" ref="2">
    <original>EL</original>
    <variation>DV</variation>
    <location>
        <begin position="245"/>
        <end position="246"/>
    </location>
</feature>
<feature type="sequence conflict" description="In Ref. 2; AAA96518." evidence="7" ref="2">
    <original>C</original>
    <variation>S</variation>
    <location>
        <position position="335"/>
    </location>
</feature>